<comment type="subunit">
    <text evidence="1">Part of the 50S ribosomal subunit.</text>
</comment>
<comment type="subcellular location">
    <subcellularLocation>
        <location>Plastid</location>
        <location>Chloroplast</location>
    </subcellularLocation>
</comment>
<comment type="similarity">
    <text evidence="1">Belongs to the universal ribosomal protein uL16 family.</text>
</comment>
<keyword id="KW-0150">Chloroplast</keyword>
<keyword id="KW-0934">Plastid</keyword>
<keyword id="KW-0687">Ribonucleoprotein</keyword>
<keyword id="KW-0689">Ribosomal protein</keyword>
<accession>Q09ME0</accession>
<dbReference type="EMBL" id="DQ864733">
    <property type="protein sequence ID" value="ABI49056.1"/>
    <property type="molecule type" value="Genomic_DNA"/>
</dbReference>
<dbReference type="RefSeq" id="YP_740513.1">
    <property type="nucleotide sequence ID" value="NC_008334.1"/>
</dbReference>
<dbReference type="SMR" id="Q09ME0"/>
<dbReference type="GeneID" id="4271189"/>
<dbReference type="KEGG" id="cit:4271189"/>
<dbReference type="OrthoDB" id="185048at71240"/>
<dbReference type="GO" id="GO:0009507">
    <property type="term" value="C:chloroplast"/>
    <property type="evidence" value="ECO:0007669"/>
    <property type="project" value="UniProtKB-SubCell"/>
</dbReference>
<dbReference type="GO" id="GO:1990904">
    <property type="term" value="C:ribonucleoprotein complex"/>
    <property type="evidence" value="ECO:0007669"/>
    <property type="project" value="UniProtKB-KW"/>
</dbReference>
<dbReference type="GO" id="GO:0005840">
    <property type="term" value="C:ribosome"/>
    <property type="evidence" value="ECO:0007669"/>
    <property type="project" value="UniProtKB-KW"/>
</dbReference>
<dbReference type="GO" id="GO:0019843">
    <property type="term" value="F:rRNA binding"/>
    <property type="evidence" value="ECO:0007669"/>
    <property type="project" value="InterPro"/>
</dbReference>
<dbReference type="GO" id="GO:0003735">
    <property type="term" value="F:structural constituent of ribosome"/>
    <property type="evidence" value="ECO:0007669"/>
    <property type="project" value="InterPro"/>
</dbReference>
<dbReference type="GO" id="GO:0006412">
    <property type="term" value="P:translation"/>
    <property type="evidence" value="ECO:0007669"/>
    <property type="project" value="UniProtKB-UniRule"/>
</dbReference>
<dbReference type="CDD" id="cd01433">
    <property type="entry name" value="Ribosomal_L16_L10e"/>
    <property type="match status" value="1"/>
</dbReference>
<dbReference type="FunFam" id="3.90.1170.10:FF:000001">
    <property type="entry name" value="50S ribosomal protein L16"/>
    <property type="match status" value="1"/>
</dbReference>
<dbReference type="Gene3D" id="3.90.1170.10">
    <property type="entry name" value="Ribosomal protein L10e/L16"/>
    <property type="match status" value="1"/>
</dbReference>
<dbReference type="HAMAP" id="MF_01342">
    <property type="entry name" value="Ribosomal_uL16"/>
    <property type="match status" value="1"/>
</dbReference>
<dbReference type="InterPro" id="IPR047873">
    <property type="entry name" value="Ribosomal_uL16"/>
</dbReference>
<dbReference type="InterPro" id="IPR000114">
    <property type="entry name" value="Ribosomal_uL16_bact-type"/>
</dbReference>
<dbReference type="InterPro" id="IPR020798">
    <property type="entry name" value="Ribosomal_uL16_CS"/>
</dbReference>
<dbReference type="InterPro" id="IPR016180">
    <property type="entry name" value="Ribosomal_uL16_dom"/>
</dbReference>
<dbReference type="InterPro" id="IPR036920">
    <property type="entry name" value="Ribosomal_uL16_sf"/>
</dbReference>
<dbReference type="NCBIfam" id="TIGR01164">
    <property type="entry name" value="rplP_bact"/>
    <property type="match status" value="1"/>
</dbReference>
<dbReference type="PANTHER" id="PTHR12220">
    <property type="entry name" value="50S/60S RIBOSOMAL PROTEIN L16"/>
    <property type="match status" value="1"/>
</dbReference>
<dbReference type="PANTHER" id="PTHR12220:SF13">
    <property type="entry name" value="LARGE RIBOSOMAL SUBUNIT PROTEIN UL16M"/>
    <property type="match status" value="1"/>
</dbReference>
<dbReference type="Pfam" id="PF00252">
    <property type="entry name" value="Ribosomal_L16"/>
    <property type="match status" value="1"/>
</dbReference>
<dbReference type="PRINTS" id="PR00060">
    <property type="entry name" value="RIBOSOMALL16"/>
</dbReference>
<dbReference type="SUPFAM" id="SSF54686">
    <property type="entry name" value="Ribosomal protein L16p/L10e"/>
    <property type="match status" value="1"/>
</dbReference>
<dbReference type="PROSITE" id="PS00586">
    <property type="entry name" value="RIBOSOMAL_L16_1"/>
    <property type="match status" value="1"/>
</dbReference>
<dbReference type="PROSITE" id="PS00701">
    <property type="entry name" value="RIBOSOMAL_L16_2"/>
    <property type="match status" value="1"/>
</dbReference>
<name>RK16_CITSI</name>
<feature type="chain" id="PRO_0000276379" description="Large ribosomal subunit protein uL16c">
    <location>
        <begin position="1"/>
        <end position="136"/>
    </location>
</feature>
<reference key="1">
    <citation type="journal article" date="2006" name="BMC Plant Biol.">
        <title>The complete chloroplast genome sequence of Citrus sinensis (L.) Osbeck var 'Ridge Pineapple': organization and phylogenetic relationships to other angiosperms.</title>
        <authorList>
            <person name="Bausher M.G."/>
            <person name="Singh N.D."/>
            <person name="Lee S.-B."/>
            <person name="Jansen R.K."/>
            <person name="Daniell H."/>
        </authorList>
    </citation>
    <scope>NUCLEOTIDE SEQUENCE [LARGE SCALE GENOMIC DNA]</scope>
    <source>
        <strain>cv. Osbeck var. Ridge Pineapple</strain>
    </source>
</reference>
<gene>
    <name evidence="1" type="primary">rpl16</name>
</gene>
<geneLocation type="chloroplast"/>
<sequence>MLSNPKRTRFRKQHRGRMKGISYRGNHICFGRYALQALEPAWITSRQIEAGRRAMTRNVRRGGKIWVRIFPDKPVTLRPTETRMGSGKGSPEYWVAVVKPGRILYEMSGVAENIARKAISIAASKMPIRTQFIISG</sequence>
<evidence type="ECO:0000255" key="1">
    <source>
        <dbReference type="HAMAP-Rule" id="MF_01342"/>
    </source>
</evidence>
<evidence type="ECO:0000305" key="2"/>
<proteinExistence type="inferred from homology"/>
<protein>
    <recommendedName>
        <fullName evidence="1">Large ribosomal subunit protein uL16c</fullName>
    </recommendedName>
    <alternativeName>
        <fullName evidence="2">50S ribosomal protein L16, chloroplastic</fullName>
    </alternativeName>
</protein>
<organism>
    <name type="scientific">Citrus sinensis</name>
    <name type="common">Sweet orange</name>
    <name type="synonym">Citrus aurantium var. sinensis</name>
    <dbReference type="NCBI Taxonomy" id="2711"/>
    <lineage>
        <taxon>Eukaryota</taxon>
        <taxon>Viridiplantae</taxon>
        <taxon>Streptophyta</taxon>
        <taxon>Embryophyta</taxon>
        <taxon>Tracheophyta</taxon>
        <taxon>Spermatophyta</taxon>
        <taxon>Magnoliopsida</taxon>
        <taxon>eudicotyledons</taxon>
        <taxon>Gunneridae</taxon>
        <taxon>Pentapetalae</taxon>
        <taxon>rosids</taxon>
        <taxon>malvids</taxon>
        <taxon>Sapindales</taxon>
        <taxon>Rutaceae</taxon>
        <taxon>Aurantioideae</taxon>
        <taxon>Citrus</taxon>
    </lineage>
</organism>